<accession>P07330</accession>
<accession>P78070</accession>
<dbReference type="EC" id="3.1.1.61" evidence="2 4 8 9"/>
<dbReference type="EC" id="3.5.1.44" evidence="2 10 11"/>
<dbReference type="EMBL" id="AH000879">
    <property type="protein sequence ID" value="AAA23569.1"/>
    <property type="molecule type" value="Genomic_DNA"/>
</dbReference>
<dbReference type="EMBL" id="U00096">
    <property type="protein sequence ID" value="AAC74953.1"/>
    <property type="molecule type" value="Genomic_DNA"/>
</dbReference>
<dbReference type="EMBL" id="AP009048">
    <property type="protein sequence ID" value="BAA15699.1"/>
    <property type="molecule type" value="Genomic_DNA"/>
</dbReference>
<dbReference type="PIR" id="D25195">
    <property type="entry name" value="XYECEB"/>
</dbReference>
<dbReference type="RefSeq" id="NP_416397.1">
    <property type="nucleotide sequence ID" value="NC_000913.3"/>
</dbReference>
<dbReference type="RefSeq" id="WP_000036361.1">
    <property type="nucleotide sequence ID" value="NZ_LN832404.1"/>
</dbReference>
<dbReference type="SMR" id="P07330"/>
<dbReference type="BioGRID" id="4260716">
    <property type="interactions" value="232"/>
</dbReference>
<dbReference type="DIP" id="DIP-9272N"/>
<dbReference type="FunCoup" id="P07330">
    <property type="interactions" value="522"/>
</dbReference>
<dbReference type="IntAct" id="P07330">
    <property type="interactions" value="10"/>
</dbReference>
<dbReference type="STRING" id="511145.b1883"/>
<dbReference type="PaxDb" id="511145-b1883"/>
<dbReference type="EnsemblBacteria" id="AAC74953">
    <property type="protein sequence ID" value="AAC74953"/>
    <property type="gene ID" value="b1883"/>
</dbReference>
<dbReference type="GeneID" id="946394"/>
<dbReference type="KEGG" id="ecj:JW1872"/>
<dbReference type="KEGG" id="eco:b1883"/>
<dbReference type="KEGG" id="ecoc:C3026_10710"/>
<dbReference type="PATRIC" id="fig|1411691.4.peg.364"/>
<dbReference type="EchoBASE" id="EB0145"/>
<dbReference type="eggNOG" id="COG2201">
    <property type="taxonomic scope" value="Bacteria"/>
</dbReference>
<dbReference type="HOGENOM" id="CLU_000445_51_0_6"/>
<dbReference type="InParanoid" id="P07330"/>
<dbReference type="OMA" id="MLEMHRA"/>
<dbReference type="OrthoDB" id="9793421at2"/>
<dbReference type="PhylomeDB" id="P07330"/>
<dbReference type="BioCyc" id="EcoCyc:CHEB-MONOMER"/>
<dbReference type="BioCyc" id="MetaCyc:CHEB-MONOMER"/>
<dbReference type="BRENDA" id="3.1.1.61">
    <property type="organism ID" value="2026"/>
</dbReference>
<dbReference type="PRO" id="PR:P07330"/>
<dbReference type="Proteomes" id="UP000000625">
    <property type="component" value="Chromosome"/>
</dbReference>
<dbReference type="GO" id="GO:0005829">
    <property type="term" value="C:cytosol"/>
    <property type="evidence" value="ECO:0000314"/>
    <property type="project" value="EcoCyc"/>
</dbReference>
<dbReference type="GO" id="GO:0005886">
    <property type="term" value="C:plasma membrane"/>
    <property type="evidence" value="ECO:0000314"/>
    <property type="project" value="CAFA"/>
</dbReference>
<dbReference type="GO" id="GO:1990827">
    <property type="term" value="F:deaminase binding"/>
    <property type="evidence" value="ECO:0000314"/>
    <property type="project" value="CAFA"/>
</dbReference>
<dbReference type="GO" id="GO:0000156">
    <property type="term" value="F:phosphorelay response regulator activity"/>
    <property type="evidence" value="ECO:0000314"/>
    <property type="project" value="EcoCyc"/>
</dbReference>
<dbReference type="GO" id="GO:0008984">
    <property type="term" value="F:protein-glutamate methylesterase activity"/>
    <property type="evidence" value="ECO:0000314"/>
    <property type="project" value="CAFA"/>
</dbReference>
<dbReference type="GO" id="GO:0050568">
    <property type="term" value="F:protein-glutamine glutaminase activity"/>
    <property type="evidence" value="ECO:0000314"/>
    <property type="project" value="EcoCyc"/>
</dbReference>
<dbReference type="GO" id="GO:0006935">
    <property type="term" value="P:chemotaxis"/>
    <property type="evidence" value="ECO:0000315"/>
    <property type="project" value="EcoCyc"/>
</dbReference>
<dbReference type="GO" id="GO:0018277">
    <property type="term" value="P:protein deamination"/>
    <property type="evidence" value="ECO:0000314"/>
    <property type="project" value="CAFA"/>
</dbReference>
<dbReference type="GO" id="GO:0006482">
    <property type="term" value="P:protein demethylation"/>
    <property type="evidence" value="ECO:0000314"/>
    <property type="project" value="CAFA"/>
</dbReference>
<dbReference type="GO" id="GO:0007165">
    <property type="term" value="P:signal transduction"/>
    <property type="evidence" value="ECO:0000314"/>
    <property type="project" value="EcoCyc"/>
</dbReference>
<dbReference type="CDD" id="cd16432">
    <property type="entry name" value="CheB_Rec"/>
    <property type="match status" value="1"/>
</dbReference>
<dbReference type="CDD" id="cd17541">
    <property type="entry name" value="REC_CheB-like"/>
    <property type="match status" value="1"/>
</dbReference>
<dbReference type="FunFam" id="3.40.50.180:FF:000001">
    <property type="entry name" value="Protein-glutamate methylesterase/protein-glutamine glutaminase"/>
    <property type="match status" value="1"/>
</dbReference>
<dbReference type="FunFam" id="3.40.50.2300:FF:000060">
    <property type="entry name" value="Protein-glutamate methylesterase/protein-glutamine glutaminase"/>
    <property type="match status" value="1"/>
</dbReference>
<dbReference type="Gene3D" id="3.40.50.2300">
    <property type="match status" value="1"/>
</dbReference>
<dbReference type="Gene3D" id="3.40.50.180">
    <property type="entry name" value="Methylesterase CheB, C-terminal domain"/>
    <property type="match status" value="1"/>
</dbReference>
<dbReference type="HAMAP" id="MF_00099">
    <property type="entry name" value="CheB_chemtxs"/>
    <property type="match status" value="1"/>
</dbReference>
<dbReference type="InterPro" id="IPR008248">
    <property type="entry name" value="CheB-like"/>
</dbReference>
<dbReference type="InterPro" id="IPR035909">
    <property type="entry name" value="CheB_C"/>
</dbReference>
<dbReference type="InterPro" id="IPR011006">
    <property type="entry name" value="CheY-like_superfamily"/>
</dbReference>
<dbReference type="InterPro" id="IPR000673">
    <property type="entry name" value="Sig_transdc_resp-reg_Me-estase"/>
</dbReference>
<dbReference type="InterPro" id="IPR001789">
    <property type="entry name" value="Sig_transdc_resp-reg_receiver"/>
</dbReference>
<dbReference type="NCBIfam" id="NF001965">
    <property type="entry name" value="PRK00742.1"/>
    <property type="match status" value="1"/>
</dbReference>
<dbReference type="NCBIfam" id="NF009206">
    <property type="entry name" value="PRK12555.1"/>
    <property type="match status" value="1"/>
</dbReference>
<dbReference type="PANTHER" id="PTHR42872">
    <property type="entry name" value="PROTEIN-GLUTAMATE METHYLESTERASE/PROTEIN-GLUTAMINE GLUTAMINASE"/>
    <property type="match status" value="1"/>
</dbReference>
<dbReference type="PANTHER" id="PTHR42872:SF6">
    <property type="entry name" value="PROTEIN-GLUTAMATE METHYLESTERASE_PROTEIN-GLUTAMINE GLUTAMINASE"/>
    <property type="match status" value="1"/>
</dbReference>
<dbReference type="Pfam" id="PF01339">
    <property type="entry name" value="CheB_methylest"/>
    <property type="match status" value="1"/>
</dbReference>
<dbReference type="Pfam" id="PF00072">
    <property type="entry name" value="Response_reg"/>
    <property type="match status" value="1"/>
</dbReference>
<dbReference type="PIRSF" id="PIRSF000876">
    <property type="entry name" value="RR_chemtxs_CheB"/>
    <property type="match status" value="1"/>
</dbReference>
<dbReference type="SMART" id="SM00448">
    <property type="entry name" value="REC"/>
    <property type="match status" value="1"/>
</dbReference>
<dbReference type="SUPFAM" id="SSF52172">
    <property type="entry name" value="CheY-like"/>
    <property type="match status" value="1"/>
</dbReference>
<dbReference type="SUPFAM" id="SSF52738">
    <property type="entry name" value="Methylesterase CheB, C-terminal domain"/>
    <property type="match status" value="1"/>
</dbReference>
<dbReference type="PROSITE" id="PS50122">
    <property type="entry name" value="CHEB"/>
    <property type="match status" value="1"/>
</dbReference>
<dbReference type="PROSITE" id="PS50110">
    <property type="entry name" value="RESPONSE_REGULATORY"/>
    <property type="match status" value="1"/>
</dbReference>
<evidence type="ECO:0000250" key="1">
    <source>
        <dbReference type="UniProtKB" id="P04042"/>
    </source>
</evidence>
<evidence type="ECO:0000255" key="2">
    <source>
        <dbReference type="HAMAP-Rule" id="MF_00099"/>
    </source>
</evidence>
<evidence type="ECO:0000269" key="3">
    <source>
    </source>
</evidence>
<evidence type="ECO:0000269" key="4">
    <source>
    </source>
</evidence>
<evidence type="ECO:0000269" key="5">
    <source>
    </source>
</evidence>
<evidence type="ECO:0000269" key="6">
    <source>
    </source>
</evidence>
<evidence type="ECO:0000269" key="7">
    <source>
    </source>
</evidence>
<evidence type="ECO:0000269" key="8">
    <source>
    </source>
</evidence>
<evidence type="ECO:0000269" key="9">
    <source>
    </source>
</evidence>
<evidence type="ECO:0000269" key="10">
    <source>
    </source>
</evidence>
<evidence type="ECO:0000269" key="11">
    <source>
    </source>
</evidence>
<evidence type="ECO:0000269" key="12">
    <source>
    </source>
</evidence>
<evidence type="ECO:0000303" key="13">
    <source>
    </source>
</evidence>
<evidence type="ECO:0000305" key="14"/>
<protein>
    <recommendedName>
        <fullName evidence="2 14">Protein-glutamate methylesterase/protein-glutamine glutaminase</fullName>
        <ecNumber evidence="2 4 8 9">3.1.1.61</ecNumber>
        <ecNumber evidence="2 10 11">3.5.1.44</ecNumber>
    </recommendedName>
    <alternativeName>
        <fullName evidence="14">Chemotaxis response regulator protein-glutamate methylesterase/glutamine deamidase</fullName>
    </alternativeName>
    <alternativeName>
        <fullName evidence="14">Methyl-accepting chemotaxis proteins-specific methylesterase/deamidase</fullName>
        <shortName evidence="14">MCP-specific methylesterase/deamidase</shortName>
    </alternativeName>
</protein>
<name>CHEB_ECOLI</name>
<sequence>MSKIRVLSVDDSALMRQIMTEIINSHSDMEMVATAPDPLVARDLIKKFNPDVLTLDVEMPRMDGLDFLEKLMRLRPMPVVMVSSLTGKGSEVTLRALELGAIDFVTKPQLGIREGMLAYNEMIAEKVRTAAKASLAAHKPLSAPTTLKAGPLLSSEKLIAIGASTGGTEAIRHVLQPLPLSSPALLITQHMPPGFTRSFADRLNKLCQIGVKEAEDGERVLPGHAYIAPGDRHMELSRSGANYQIKIHDGPAVNRHRPSVDVLFHSVAKQAGRNAVGVILTGMGNDGAAGMLAMRQAGAWTLAQNEASCVVFGMPREAINMGGVCEVVDLSQVSQQMLAKISAGQAIRI</sequence>
<comment type="function">
    <text evidence="4 5 8 9 10 11">Involved in chemotaxis (PubMed:2188960, PubMed:324984, PubMed:358191, PubMed:392505). Part of a chemotaxis signal transduction system that modulates chemotaxis in response to various stimuli (PubMed:2188960, PubMed:392505). Catalyzes the demethylation of specific methylglutamate residues introduced into the chemoreceptors (methyl-accepting chemotaxis proteins or MCP) by CheR (PubMed:2188960, PubMed:358191, PubMed:392505). Also mediates the irreversible deamidation of specific glutamine residues to glutamic acid (PubMed:6300110, PubMed:6304723). Catalyzes its own deactivation by removing the activating phosphoryl group (PubMed:2188960).</text>
</comment>
<comment type="catalytic activity">
    <reaction evidence="2 4 8 9">
        <text>[protein]-L-glutamate 5-O-methyl ester + H2O = L-glutamyl-[protein] + methanol + H(+)</text>
        <dbReference type="Rhea" id="RHEA:23236"/>
        <dbReference type="Rhea" id="RHEA-COMP:10208"/>
        <dbReference type="Rhea" id="RHEA-COMP:10311"/>
        <dbReference type="ChEBI" id="CHEBI:15377"/>
        <dbReference type="ChEBI" id="CHEBI:15378"/>
        <dbReference type="ChEBI" id="CHEBI:17790"/>
        <dbReference type="ChEBI" id="CHEBI:29973"/>
        <dbReference type="ChEBI" id="CHEBI:82795"/>
        <dbReference type="EC" id="3.1.1.61"/>
    </reaction>
</comment>
<comment type="catalytic activity">
    <reaction evidence="2 10 11">
        <text>L-glutaminyl-[protein] + H2O = L-glutamyl-[protein] + NH4(+)</text>
        <dbReference type="Rhea" id="RHEA:16441"/>
        <dbReference type="Rhea" id="RHEA-COMP:10207"/>
        <dbReference type="Rhea" id="RHEA-COMP:10208"/>
        <dbReference type="ChEBI" id="CHEBI:15377"/>
        <dbReference type="ChEBI" id="CHEBI:28938"/>
        <dbReference type="ChEBI" id="CHEBI:29973"/>
        <dbReference type="ChEBI" id="CHEBI:30011"/>
        <dbReference type="EC" id="3.5.1.44"/>
    </reaction>
</comment>
<comment type="activity regulation">
    <text evidence="4 9">Methylesterase activity is activated via phosphorylation in response to negative chemotactic stimuli and is inhibited in the presence of attractants (PubMed:2188960, PubMed:392505). Activation requires both CheA and CheW (PubMed:2188960).</text>
</comment>
<comment type="subunit">
    <text evidence="3 12">Interacts with CheA (PubMed:7578071). Binds to a C-terminal pentapeptide sequence carried by certain receptors (PubMed:16573695).</text>
</comment>
<comment type="interaction">
    <interactant intactId="EBI-1125895">
        <id>P07330</id>
    </interactant>
    <interactant intactId="EBI-1026773">
        <id>P07363</id>
        <label>cheA</label>
    </interactant>
    <organismsDiffer>false</organismsDiffer>
    <experiments>3</experiments>
</comment>
<comment type="subcellular location">
    <subcellularLocation>
        <location evidence="2 8">Cytoplasm</location>
    </subcellularLocation>
</comment>
<comment type="domain">
    <text evidence="2 4">Contains a C-terminal catalytic domain, and an N-terminal region which modulates catalytic activity.</text>
</comment>
<comment type="PTM">
    <text evidence="4 6">Phosphorylated by CheA (PubMed:2188960, PubMed:3280143). Phosphorylation of the N-terminal regulatory domain activates the methylesterase activity (PubMed:2188960).</text>
</comment>
<comment type="disruption phenotype">
    <text evidence="7">Mutants are defective in chemotaxis. They exhibit very high tumbling rates.</text>
</comment>
<comment type="similarity">
    <text evidence="2 14">Belongs to the CheB family.</text>
</comment>
<keyword id="KW-0145">Chemotaxis</keyword>
<keyword id="KW-0963">Cytoplasm</keyword>
<keyword id="KW-0378">Hydrolase</keyword>
<keyword id="KW-0597">Phosphoprotein</keyword>
<keyword id="KW-1185">Reference proteome</keyword>
<gene>
    <name evidence="2 13" type="primary">cheB</name>
    <name type="ordered locus">b1883</name>
    <name type="ordered locus">JW1872</name>
</gene>
<proteinExistence type="evidence at protein level"/>
<organism>
    <name type="scientific">Escherichia coli (strain K12)</name>
    <dbReference type="NCBI Taxonomy" id="83333"/>
    <lineage>
        <taxon>Bacteria</taxon>
        <taxon>Pseudomonadati</taxon>
        <taxon>Pseudomonadota</taxon>
        <taxon>Gammaproteobacteria</taxon>
        <taxon>Enterobacterales</taxon>
        <taxon>Enterobacteriaceae</taxon>
        <taxon>Escherichia</taxon>
    </lineage>
</organism>
<reference key="1">
    <citation type="journal article" date="1986" name="J. Bacteriol.">
        <title>Nucleotide sequence corresponding to five chemotaxis genes in Escherichia coli.</title>
        <authorList>
            <person name="Mutoh N."/>
            <person name="Simon M.I."/>
        </authorList>
    </citation>
    <scope>NUCLEOTIDE SEQUENCE [GENOMIC DNA]</scope>
</reference>
<reference key="2">
    <citation type="journal article" date="1996" name="DNA Res.">
        <title>A 460-kb DNA sequence of the Escherichia coli K-12 genome corresponding to the 40.1-50.0 min region on the linkage map.</title>
        <authorList>
            <person name="Itoh T."/>
            <person name="Aiba H."/>
            <person name="Baba T."/>
            <person name="Fujita K."/>
            <person name="Hayashi K."/>
            <person name="Inada T."/>
            <person name="Isono K."/>
            <person name="Kasai H."/>
            <person name="Kimura S."/>
            <person name="Kitakawa M."/>
            <person name="Kitagawa M."/>
            <person name="Makino K."/>
            <person name="Miki T."/>
            <person name="Mizobuchi K."/>
            <person name="Mori H."/>
            <person name="Mori T."/>
            <person name="Motomura K."/>
            <person name="Nakade S."/>
            <person name="Nakamura Y."/>
            <person name="Nashimoto H."/>
            <person name="Nishio Y."/>
            <person name="Oshima T."/>
            <person name="Saito N."/>
            <person name="Sampei G."/>
            <person name="Seki Y."/>
            <person name="Sivasundaram S."/>
            <person name="Tagami H."/>
            <person name="Takeda J."/>
            <person name="Takemoto K."/>
            <person name="Wada C."/>
            <person name="Yamamoto Y."/>
            <person name="Horiuchi T."/>
        </authorList>
    </citation>
    <scope>NUCLEOTIDE SEQUENCE [LARGE SCALE GENOMIC DNA]</scope>
    <source>
        <strain>K12 / W3110 / ATCC 27325 / DSM 5911</strain>
    </source>
</reference>
<reference key="3">
    <citation type="journal article" date="1997" name="Science">
        <title>The complete genome sequence of Escherichia coli K-12.</title>
        <authorList>
            <person name="Blattner F.R."/>
            <person name="Plunkett G. III"/>
            <person name="Bloch C.A."/>
            <person name="Perna N.T."/>
            <person name="Burland V."/>
            <person name="Riley M."/>
            <person name="Collado-Vides J."/>
            <person name="Glasner J.D."/>
            <person name="Rode C.K."/>
            <person name="Mayhew G.F."/>
            <person name="Gregor J."/>
            <person name="Davis N.W."/>
            <person name="Kirkpatrick H.A."/>
            <person name="Goeden M.A."/>
            <person name="Rose D.J."/>
            <person name="Mau B."/>
            <person name="Shao Y."/>
        </authorList>
    </citation>
    <scope>NUCLEOTIDE SEQUENCE [LARGE SCALE GENOMIC DNA]</scope>
    <source>
        <strain>K12 / MG1655 / ATCC 47076</strain>
    </source>
</reference>
<reference key="4">
    <citation type="journal article" date="2006" name="Mol. Syst. Biol.">
        <title>Highly accurate genome sequences of Escherichia coli K-12 strains MG1655 and W3110.</title>
        <authorList>
            <person name="Hayashi K."/>
            <person name="Morooka N."/>
            <person name="Yamamoto Y."/>
            <person name="Fujita K."/>
            <person name="Isono K."/>
            <person name="Choi S."/>
            <person name="Ohtsubo E."/>
            <person name="Baba T."/>
            <person name="Wanner B.L."/>
            <person name="Mori H."/>
            <person name="Horiuchi T."/>
        </authorList>
    </citation>
    <scope>NUCLEOTIDE SEQUENCE [LARGE SCALE GENOMIC DNA]</scope>
    <source>
        <strain>K12 / W3110 / ATCC 27325 / DSM 5911</strain>
    </source>
</reference>
<reference key="5">
    <citation type="journal article" date="1977" name="J. Bacteriol.">
        <title>Identification of polypeptides necessary for chemotaxis in Escherichia coli.</title>
        <authorList>
            <person name="Silverman M."/>
            <person name="Simon M."/>
        </authorList>
    </citation>
    <scope>IDENTIFICATION</scope>
    <scope>GENE NAME</scope>
    <scope>FUNCTION</scope>
</reference>
<reference key="6">
    <citation type="journal article" date="1978" name="J. Bacteriol.">
        <title>Complementation analysis and deletion mapping of Escherichia coli mutants defective in chemotaxis.</title>
        <authorList>
            <person name="Parkinson J.S."/>
        </authorList>
    </citation>
    <scope>DISRUPTION PHENOTYPE</scope>
    <source>
        <strain>K12</strain>
    </source>
</reference>
<reference key="7">
    <citation type="journal article" date="1978" name="Proc. Natl. Acad. Sci. U.S.A.">
        <title>A protein methylesterase involved in bacterial sensing.</title>
        <authorList>
            <person name="Stock J.B."/>
            <person name="Koshland D.E. Jr."/>
        </authorList>
    </citation>
    <scope>FUNCTION</scope>
    <scope>CATALYTIC ACTIVITY</scope>
    <scope>SUBCELLULAR LOCATION</scope>
</reference>
<reference key="8">
    <citation type="journal article" date="1979" name="Proc. Natl. Acad. Sci. U.S.A.">
        <title>Attractants and repellents control demethylation of methylated chemotaxis proteins in Escherichia coli.</title>
        <authorList>
            <person name="Toews M.L."/>
            <person name="Goy M.F."/>
            <person name="Springer M.S."/>
            <person name="Adler J."/>
        </authorList>
    </citation>
    <scope>FUNCTION</scope>
    <scope>CATALYTIC ACTIVITY</scope>
    <scope>ACTIVITY REGULATION</scope>
</reference>
<reference key="9">
    <citation type="journal article" date="1983" name="J. Biol. Chem.">
        <title>Multiple covalent modifications of Trg, a sensory transducer of Escherichia coli.</title>
        <authorList>
            <person name="Kehry M.R."/>
            <person name="Engstrom P."/>
            <person name="Dahlquist F.W."/>
            <person name="Hazelbauer G.L."/>
        </authorList>
    </citation>
    <scope>FUNCTION AS A DEAMIDASE</scope>
</reference>
<reference key="10">
    <citation type="journal article" date="1983" name="Proc. Natl. Acad. Sci. U.S.A.">
        <title>Enzymatic deamidation of methyl-accepting chemotaxis proteins in Escherichia coli catalyzed by the cheB gene product.</title>
        <authorList>
            <person name="Kehry M.R."/>
            <person name="Bond M.W."/>
            <person name="Hunkapiller M.W."/>
            <person name="Dahlquist F.W."/>
        </authorList>
    </citation>
    <scope>FUNCTION AS A DEAMIDASE</scope>
</reference>
<reference key="11">
    <citation type="journal article" date="1988" name="Cell">
        <title>Phosphorylation of three proteins in the signaling pathway of bacterial chemotaxis.</title>
        <authorList>
            <person name="Hess J.F."/>
            <person name="Oosawa K."/>
            <person name="Kaplan N."/>
            <person name="Simon M.I."/>
        </authorList>
    </citation>
    <scope>PHOSPHORYLATION</scope>
</reference>
<reference key="12">
    <citation type="journal article" date="1990" name="J. Bacteriol.">
        <title>Mutations that affect control of the methylesterase activity of CheB, a component of the chemotaxis adaptation system in Escherichia coli.</title>
        <authorList>
            <person name="Stewart R.C."/>
            <person name="Roth A.F."/>
            <person name="Dahlquist F.W."/>
        </authorList>
    </citation>
    <scope>FUNCTION</scope>
    <scope>CATALYTIC ACTIVITY</scope>
    <scope>ACTIVITY REGULATION</scope>
    <scope>DOMAIN</scope>
    <scope>PHOSPHORYLATION</scope>
    <scope>MUTAGENESIS OF ASP-10; ASP-11; ASP-56 AND LEU-99</scope>
</reference>
<reference key="13">
    <citation type="journal article" date="1995" name="Biochemistry">
        <title>The response regulators CheB and CheY exhibit competitive binding to the kinase CheA.</title>
        <authorList>
            <person name="Li J."/>
            <person name="Swanson R.V."/>
            <person name="Simon M.I."/>
            <person name="Weis R.M."/>
        </authorList>
    </citation>
    <scope>INTERACTION WITH CHEA</scope>
</reference>
<reference key="14">
    <citation type="journal article" date="2006" name="Mol. Microbiol.">
        <title>The carboxyl-terminal linker is important for chemoreceptor function.</title>
        <authorList>
            <person name="Li M."/>
            <person name="Hazelbauer G.L."/>
        </authorList>
    </citation>
    <scope>INTERACTION WITH CHEMORECEPTORS</scope>
</reference>
<feature type="chain" id="PRO_0000157992" description="Protein-glutamate methylesterase/protein-glutamine glutaminase">
    <location>
        <begin position="1"/>
        <end position="349"/>
    </location>
</feature>
<feature type="domain" description="Response regulatory" evidence="2">
    <location>
        <begin position="5"/>
        <end position="122"/>
    </location>
</feature>
<feature type="domain" description="CheB-type methylesterase" evidence="2">
    <location>
        <begin position="152"/>
        <end position="344"/>
    </location>
</feature>
<feature type="active site" evidence="1 2">
    <location>
        <position position="164"/>
    </location>
</feature>
<feature type="active site" evidence="1 2">
    <location>
        <position position="190"/>
    </location>
</feature>
<feature type="active site" evidence="1 2">
    <location>
        <position position="286"/>
    </location>
</feature>
<feature type="modified residue" description="4-aspartylphosphate" evidence="1 2">
    <location>
        <position position="56"/>
    </location>
</feature>
<feature type="mutagenesis site" description="Eliminates activation in response to negative stimuli, but does not affect response to positive stimuli." evidence="4">
    <original>D</original>
    <variation>N</variation>
    <location>
        <position position="10"/>
    </location>
</feature>
<feature type="mutagenesis site" description="Eliminates activation in response to negative stimuli, but does not affect response to positive stimuli." evidence="4">
    <original>D</original>
    <variation>E</variation>
    <variation>N</variation>
    <location>
        <position position="11"/>
    </location>
</feature>
<feature type="mutagenesis site" description="Eliminates activation in response to negative stimuli, but does not affect response to positive stimuli." evidence="4">
    <original>D</original>
    <variation>E</variation>
    <variation>N</variation>
    <location>
        <position position="56"/>
    </location>
</feature>
<feature type="mutagenesis site" description="Eliminates activation in response to negative stimuli, but does not affect response to positive stimuli." evidence="4">
    <original>L</original>
    <variation>P</variation>
    <location>
        <position position="99"/>
    </location>
</feature>
<feature type="sequence conflict" description="In Ref. 1; AAA23569." evidence="14" ref="1">
    <original>A</original>
    <variation>P</variation>
    <location>
        <position position="96"/>
    </location>
</feature>
<feature type="sequence conflict" description="In Ref. 1; AAA23569." evidence="14" ref="1">
    <original>E</original>
    <variation>Q</variation>
    <location>
        <position position="125"/>
    </location>
</feature>